<feature type="chain" id="PRO_1000066619" description="Acyl carrier protein">
    <location>
        <begin position="1"/>
        <end position="76"/>
    </location>
</feature>
<feature type="domain" description="Carrier" evidence="2">
    <location>
        <begin position="1"/>
        <end position="76"/>
    </location>
</feature>
<feature type="modified residue" description="O-(pantetheine 4'-phosphoryl)serine" evidence="2">
    <location>
        <position position="36"/>
    </location>
</feature>
<sequence>MSIEERVKKIIVEQLGVKEDDVKPEASFIEDLGADSLDTVELVMALEEEFDIEIPDEEAEKITTVQSAIDYVQNNQ</sequence>
<organism>
    <name type="scientific">Histophilus somni (strain 129Pt)</name>
    <name type="common">Haemophilus somnus</name>
    <dbReference type="NCBI Taxonomy" id="205914"/>
    <lineage>
        <taxon>Bacteria</taxon>
        <taxon>Pseudomonadati</taxon>
        <taxon>Pseudomonadota</taxon>
        <taxon>Gammaproteobacteria</taxon>
        <taxon>Pasteurellales</taxon>
        <taxon>Pasteurellaceae</taxon>
        <taxon>Histophilus</taxon>
    </lineage>
</organism>
<reference key="1">
    <citation type="journal article" date="2007" name="J. Bacteriol.">
        <title>Complete genome sequence of Haemophilus somnus (Histophilus somni) strain 129Pt and comparison to Haemophilus ducreyi 35000HP and Haemophilus influenzae Rd.</title>
        <authorList>
            <person name="Challacombe J.F."/>
            <person name="Duncan A.J."/>
            <person name="Brettin T.S."/>
            <person name="Bruce D."/>
            <person name="Chertkov O."/>
            <person name="Detter J.C."/>
            <person name="Han C.S."/>
            <person name="Misra M."/>
            <person name="Richardson P."/>
            <person name="Tapia R."/>
            <person name="Thayer N."/>
            <person name="Xie G."/>
            <person name="Inzana T.J."/>
        </authorList>
    </citation>
    <scope>NUCLEOTIDE SEQUENCE [LARGE SCALE GENOMIC DNA]</scope>
    <source>
        <strain>129Pt</strain>
    </source>
</reference>
<protein>
    <recommendedName>
        <fullName evidence="1">Acyl carrier protein</fullName>
        <shortName evidence="1">ACP</shortName>
    </recommendedName>
</protein>
<name>ACP_HISS1</name>
<gene>
    <name evidence="1" type="primary">acpP</name>
    <name type="ordered locus">HS_0168</name>
</gene>
<comment type="function">
    <text evidence="1">Carrier of the growing fatty acid chain in fatty acid biosynthesis.</text>
</comment>
<comment type="pathway">
    <text evidence="1">Lipid metabolism; fatty acid biosynthesis.</text>
</comment>
<comment type="subcellular location">
    <subcellularLocation>
        <location evidence="1">Cytoplasm</location>
    </subcellularLocation>
</comment>
<comment type="PTM">
    <text evidence="1">4'-phosphopantetheine is transferred from CoA to a specific serine of apo-ACP by AcpS. This modification is essential for activity because fatty acids are bound in thioester linkage to the sulfhydryl of the prosthetic group.</text>
</comment>
<comment type="similarity">
    <text evidence="1">Belongs to the acyl carrier protein (ACP) family.</text>
</comment>
<accession>Q0I0V3</accession>
<keyword id="KW-0963">Cytoplasm</keyword>
<keyword id="KW-0275">Fatty acid biosynthesis</keyword>
<keyword id="KW-0276">Fatty acid metabolism</keyword>
<keyword id="KW-0444">Lipid biosynthesis</keyword>
<keyword id="KW-0443">Lipid metabolism</keyword>
<keyword id="KW-0596">Phosphopantetheine</keyword>
<keyword id="KW-0597">Phosphoprotein</keyword>
<dbReference type="EMBL" id="CP000436">
    <property type="protein sequence ID" value="ABI24446.1"/>
    <property type="molecule type" value="Genomic_DNA"/>
</dbReference>
<dbReference type="SMR" id="Q0I0V3"/>
<dbReference type="KEGG" id="hso:HS_0168"/>
<dbReference type="eggNOG" id="COG0236">
    <property type="taxonomic scope" value="Bacteria"/>
</dbReference>
<dbReference type="HOGENOM" id="CLU_108696_5_1_6"/>
<dbReference type="UniPathway" id="UPA00094"/>
<dbReference type="GO" id="GO:0005829">
    <property type="term" value="C:cytosol"/>
    <property type="evidence" value="ECO:0007669"/>
    <property type="project" value="TreeGrafter"/>
</dbReference>
<dbReference type="GO" id="GO:0016020">
    <property type="term" value="C:membrane"/>
    <property type="evidence" value="ECO:0007669"/>
    <property type="project" value="GOC"/>
</dbReference>
<dbReference type="GO" id="GO:0000035">
    <property type="term" value="F:acyl binding"/>
    <property type="evidence" value="ECO:0007669"/>
    <property type="project" value="TreeGrafter"/>
</dbReference>
<dbReference type="GO" id="GO:0000036">
    <property type="term" value="F:acyl carrier activity"/>
    <property type="evidence" value="ECO:0007669"/>
    <property type="project" value="UniProtKB-UniRule"/>
</dbReference>
<dbReference type="GO" id="GO:0009245">
    <property type="term" value="P:lipid A biosynthetic process"/>
    <property type="evidence" value="ECO:0007669"/>
    <property type="project" value="TreeGrafter"/>
</dbReference>
<dbReference type="FunFam" id="1.10.1200.10:FF:000001">
    <property type="entry name" value="Acyl carrier protein"/>
    <property type="match status" value="1"/>
</dbReference>
<dbReference type="Gene3D" id="1.10.1200.10">
    <property type="entry name" value="ACP-like"/>
    <property type="match status" value="1"/>
</dbReference>
<dbReference type="HAMAP" id="MF_01217">
    <property type="entry name" value="Acyl_carrier"/>
    <property type="match status" value="1"/>
</dbReference>
<dbReference type="InterPro" id="IPR003231">
    <property type="entry name" value="ACP"/>
</dbReference>
<dbReference type="InterPro" id="IPR036736">
    <property type="entry name" value="ACP-like_sf"/>
</dbReference>
<dbReference type="InterPro" id="IPR009081">
    <property type="entry name" value="PP-bd_ACP"/>
</dbReference>
<dbReference type="InterPro" id="IPR006162">
    <property type="entry name" value="Ppantetheine_attach_site"/>
</dbReference>
<dbReference type="NCBIfam" id="TIGR00517">
    <property type="entry name" value="acyl_carrier"/>
    <property type="match status" value="1"/>
</dbReference>
<dbReference type="NCBIfam" id="NF002148">
    <property type="entry name" value="PRK00982.1-2"/>
    <property type="match status" value="1"/>
</dbReference>
<dbReference type="NCBIfam" id="NF002149">
    <property type="entry name" value="PRK00982.1-3"/>
    <property type="match status" value="1"/>
</dbReference>
<dbReference type="NCBIfam" id="NF002150">
    <property type="entry name" value="PRK00982.1-4"/>
    <property type="match status" value="1"/>
</dbReference>
<dbReference type="NCBIfam" id="NF002151">
    <property type="entry name" value="PRK00982.1-5"/>
    <property type="match status" value="1"/>
</dbReference>
<dbReference type="PANTHER" id="PTHR20863">
    <property type="entry name" value="ACYL CARRIER PROTEIN"/>
    <property type="match status" value="1"/>
</dbReference>
<dbReference type="PANTHER" id="PTHR20863:SF76">
    <property type="entry name" value="CARRIER DOMAIN-CONTAINING PROTEIN"/>
    <property type="match status" value="1"/>
</dbReference>
<dbReference type="Pfam" id="PF00550">
    <property type="entry name" value="PP-binding"/>
    <property type="match status" value="1"/>
</dbReference>
<dbReference type="SUPFAM" id="SSF47336">
    <property type="entry name" value="ACP-like"/>
    <property type="match status" value="1"/>
</dbReference>
<dbReference type="PROSITE" id="PS50075">
    <property type="entry name" value="CARRIER"/>
    <property type="match status" value="1"/>
</dbReference>
<dbReference type="PROSITE" id="PS00012">
    <property type="entry name" value="PHOSPHOPANTETHEINE"/>
    <property type="match status" value="1"/>
</dbReference>
<evidence type="ECO:0000255" key="1">
    <source>
        <dbReference type="HAMAP-Rule" id="MF_01217"/>
    </source>
</evidence>
<evidence type="ECO:0000255" key="2">
    <source>
        <dbReference type="PROSITE-ProRule" id="PRU00258"/>
    </source>
</evidence>
<proteinExistence type="inferred from homology"/>